<sequence length="1002" mass="109539">MLRAAAAAAAVFPSRFAAAPAVAAVEEVRSPLLRVLGALRGGRVSTLGRRARFCSNSAGSDSEAAAAEAKAEDAVAAEGEADGKASSAIVPTVLRPEDCLSVIALPLPHRPLFPGFYMPIYVKDQKLLQALVENRKRSIPYAGAFLVKDEEGTDPNIVTSSDSDKSIDDLKGKELLQRLNEVGTLAQITSIQGDQVVLLGHRRLKITEMVQEDPLTVKVDHLKEKPYDKDDDVIKATSFEVISTLREVLKASSLWKDHVQTYTQHMGDFNYPRLADFGAAISGANKFLCQEVLEELDVYKRLKLTLELVKKEMEISKLQQSIAKAIEEKISGDQRRYLLNEQLKAIKKELGLETDDKTALSAKFRERIEAKKEKCPAHVLQVIEEELTKLQLLEASSSEFNVTRNYLDWLTVLPWGNYSDENFDVHHAQQILDEDHYGLSDVKERILEFIAVGKLRGTSQGKIICLSGPPGVGKTSIGRSIARALNRKFYRFSVGGLADVAEIKGHRRTYVGAMPGKMVQCLKSVGTANPLVLIDEIDKLGRGHSGDPASALLELLDPEQNVNFLDHYLDVPIDLSKVLFVCTANVIEMIPNPLLDRMEIIAIAGYITDEKMHIARDYLEKNTREACGIKPEQAEVTDAALLALIESYCREAGVRNLQKQIEKIYRKIALQLVRQGVSNEPTQEAAIVTASEEPNGGDSANKLKDETMEDPATENAAMTNADTASKEASELDLLKRTVDHDVHPAETPKEAVLTDSALSTDKLCTPEGNKDMEGAKEESADKAVEKVVIDSSNLGDYVGKPVFQAERIYEQTPVGVVMGLAWTAMGGSTLYIETTKVEEGDGKGALVLTGQLGDVMKESAQIAHTVGRAILLDKEPENLFFANSKVHLHVPAGSTPKDGPSAGCTMITSMLSLAMGKPVKKDLAMTGEVTLTGRILPIGGVKEKTIAARRSAVKTIVFPAANKRDFDELAPNVKEGLEVHFVDTYNEIFDIAFQSETQTETS</sequence>
<accession>A2YQ56</accession>
<accession>Q4ZJ72</accession>
<dbReference type="EC" id="3.4.21.53" evidence="1"/>
<dbReference type="EMBL" id="DQ004688">
    <property type="protein sequence ID" value="AAY21162.1"/>
    <property type="molecule type" value="mRNA"/>
</dbReference>
<dbReference type="EMBL" id="CM000132">
    <property type="protein sequence ID" value="EAZ05217.1"/>
    <property type="molecule type" value="Genomic_DNA"/>
</dbReference>
<dbReference type="SMR" id="A2YQ56"/>
<dbReference type="STRING" id="39946.A2YQ56"/>
<dbReference type="EnsemblPlants" id="BGIOSGA023678-TA">
    <molecule id="A2YQ56-1"/>
    <property type="protein sequence ID" value="BGIOSGA023678-PA"/>
    <property type="gene ID" value="BGIOSGA023678"/>
</dbReference>
<dbReference type="Gramene" id="BGIOSGA023678-TA">
    <molecule id="A2YQ56-1"/>
    <property type="protein sequence ID" value="BGIOSGA023678-PA"/>
    <property type="gene ID" value="BGIOSGA023678"/>
</dbReference>
<dbReference type="HOGENOM" id="CLU_004109_2_0_1"/>
<dbReference type="OMA" id="WLTNIPW"/>
<dbReference type="Proteomes" id="UP000007015">
    <property type="component" value="Chromosome 7"/>
</dbReference>
<dbReference type="GO" id="GO:0005759">
    <property type="term" value="C:mitochondrial matrix"/>
    <property type="evidence" value="ECO:0007669"/>
    <property type="project" value="UniProtKB-SubCell"/>
</dbReference>
<dbReference type="GO" id="GO:0005524">
    <property type="term" value="F:ATP binding"/>
    <property type="evidence" value="ECO:0007669"/>
    <property type="project" value="UniProtKB-UniRule"/>
</dbReference>
<dbReference type="GO" id="GO:0016887">
    <property type="term" value="F:ATP hydrolysis activity"/>
    <property type="evidence" value="ECO:0007669"/>
    <property type="project" value="UniProtKB-UniRule"/>
</dbReference>
<dbReference type="GO" id="GO:0004176">
    <property type="term" value="F:ATP-dependent peptidase activity"/>
    <property type="evidence" value="ECO:0007669"/>
    <property type="project" value="UniProtKB-UniRule"/>
</dbReference>
<dbReference type="GO" id="GO:0043565">
    <property type="term" value="F:sequence-specific DNA binding"/>
    <property type="evidence" value="ECO:0007669"/>
    <property type="project" value="UniProtKB-UniRule"/>
</dbReference>
<dbReference type="GO" id="GO:0004252">
    <property type="term" value="F:serine-type endopeptidase activity"/>
    <property type="evidence" value="ECO:0007669"/>
    <property type="project" value="UniProtKB-UniRule"/>
</dbReference>
<dbReference type="GO" id="GO:0003697">
    <property type="term" value="F:single-stranded DNA binding"/>
    <property type="evidence" value="ECO:0007669"/>
    <property type="project" value="TreeGrafter"/>
</dbReference>
<dbReference type="GO" id="GO:0034599">
    <property type="term" value="P:cellular response to oxidative stress"/>
    <property type="evidence" value="ECO:0007669"/>
    <property type="project" value="UniProtKB-UniRule"/>
</dbReference>
<dbReference type="GO" id="GO:0051131">
    <property type="term" value="P:chaperone-mediated protein complex assembly"/>
    <property type="evidence" value="ECO:0007669"/>
    <property type="project" value="UniProtKB-UniRule"/>
</dbReference>
<dbReference type="GO" id="GO:0007005">
    <property type="term" value="P:mitochondrion organization"/>
    <property type="evidence" value="ECO:0007669"/>
    <property type="project" value="TreeGrafter"/>
</dbReference>
<dbReference type="GO" id="GO:0070407">
    <property type="term" value="P:oxidation-dependent protein catabolic process"/>
    <property type="evidence" value="ECO:0007669"/>
    <property type="project" value="UniProtKB-UniRule"/>
</dbReference>
<dbReference type="GO" id="GO:0006515">
    <property type="term" value="P:protein quality control for misfolded or incompletely synthesized proteins"/>
    <property type="evidence" value="ECO:0007669"/>
    <property type="project" value="UniProtKB-UniRule"/>
</dbReference>
<dbReference type="CDD" id="cd19500">
    <property type="entry name" value="RecA-like_Lon"/>
    <property type="match status" value="1"/>
</dbReference>
<dbReference type="FunFam" id="3.40.50.300:FF:000021">
    <property type="entry name" value="Lon protease homolog"/>
    <property type="match status" value="1"/>
</dbReference>
<dbReference type="FunFam" id="1.10.8.60:FF:000080">
    <property type="entry name" value="Lon protease homolog, mitochondrial"/>
    <property type="match status" value="1"/>
</dbReference>
<dbReference type="FunFam" id="1.20.5.5270:FF:000001">
    <property type="entry name" value="Lon protease homolog, mitochondrial"/>
    <property type="match status" value="1"/>
</dbReference>
<dbReference type="FunFam" id="1.20.58.1480:FF:000006">
    <property type="entry name" value="Lon protease homolog, mitochondrial"/>
    <property type="match status" value="1"/>
</dbReference>
<dbReference type="FunFam" id="2.30.130.40:FF:000007">
    <property type="entry name" value="Lon protease homolog, mitochondrial"/>
    <property type="match status" value="1"/>
</dbReference>
<dbReference type="FunFam" id="3.30.230.10:FF:000015">
    <property type="entry name" value="Lon protease homolog, mitochondrial"/>
    <property type="match status" value="1"/>
</dbReference>
<dbReference type="Gene3D" id="1.10.8.60">
    <property type="match status" value="1"/>
</dbReference>
<dbReference type="Gene3D" id="1.20.5.5270">
    <property type="match status" value="1"/>
</dbReference>
<dbReference type="Gene3D" id="1.20.58.1480">
    <property type="match status" value="1"/>
</dbReference>
<dbReference type="Gene3D" id="3.30.230.10">
    <property type="match status" value="1"/>
</dbReference>
<dbReference type="Gene3D" id="2.30.130.40">
    <property type="entry name" value="LON domain-like"/>
    <property type="match status" value="1"/>
</dbReference>
<dbReference type="Gene3D" id="3.40.50.300">
    <property type="entry name" value="P-loop containing nucleotide triphosphate hydrolases"/>
    <property type="match status" value="1"/>
</dbReference>
<dbReference type="HAMAP" id="MF_03120">
    <property type="entry name" value="lonm_euk"/>
    <property type="match status" value="1"/>
</dbReference>
<dbReference type="InterPro" id="IPR003593">
    <property type="entry name" value="AAA+_ATPase"/>
</dbReference>
<dbReference type="InterPro" id="IPR003959">
    <property type="entry name" value="ATPase_AAA_core"/>
</dbReference>
<dbReference type="InterPro" id="IPR004815">
    <property type="entry name" value="Lon_bac/euk-typ"/>
</dbReference>
<dbReference type="InterPro" id="IPR054594">
    <property type="entry name" value="Lon_lid"/>
</dbReference>
<dbReference type="InterPro" id="IPR008269">
    <property type="entry name" value="Lon_proteolytic"/>
</dbReference>
<dbReference type="InterPro" id="IPR027065">
    <property type="entry name" value="Lon_Prtase"/>
</dbReference>
<dbReference type="InterPro" id="IPR003111">
    <property type="entry name" value="Lon_prtase_N"/>
</dbReference>
<dbReference type="InterPro" id="IPR046336">
    <property type="entry name" value="Lon_prtase_N_sf"/>
</dbReference>
<dbReference type="InterPro" id="IPR027503">
    <property type="entry name" value="Lonm_euk"/>
</dbReference>
<dbReference type="InterPro" id="IPR027417">
    <property type="entry name" value="P-loop_NTPase"/>
</dbReference>
<dbReference type="InterPro" id="IPR008268">
    <property type="entry name" value="Peptidase_S16_AS"/>
</dbReference>
<dbReference type="InterPro" id="IPR015947">
    <property type="entry name" value="PUA-like_sf"/>
</dbReference>
<dbReference type="InterPro" id="IPR020568">
    <property type="entry name" value="Ribosomal_Su5_D2-typ_SF"/>
</dbReference>
<dbReference type="InterPro" id="IPR014721">
    <property type="entry name" value="Ribsml_uS5_D2-typ_fold_subgr"/>
</dbReference>
<dbReference type="NCBIfam" id="TIGR00763">
    <property type="entry name" value="lon"/>
    <property type="match status" value="1"/>
</dbReference>
<dbReference type="PANTHER" id="PTHR43718">
    <property type="entry name" value="LON PROTEASE"/>
    <property type="match status" value="1"/>
</dbReference>
<dbReference type="PANTHER" id="PTHR43718:SF2">
    <property type="entry name" value="LON PROTEASE HOMOLOG, MITOCHONDRIAL"/>
    <property type="match status" value="1"/>
</dbReference>
<dbReference type="Pfam" id="PF00004">
    <property type="entry name" value="AAA"/>
    <property type="match status" value="1"/>
</dbReference>
<dbReference type="Pfam" id="PF05362">
    <property type="entry name" value="Lon_C"/>
    <property type="match status" value="1"/>
</dbReference>
<dbReference type="Pfam" id="PF22667">
    <property type="entry name" value="Lon_lid"/>
    <property type="match status" value="1"/>
</dbReference>
<dbReference type="Pfam" id="PF02190">
    <property type="entry name" value="LON_substr_bdg"/>
    <property type="match status" value="1"/>
</dbReference>
<dbReference type="PRINTS" id="PR00830">
    <property type="entry name" value="ENDOLAPTASE"/>
</dbReference>
<dbReference type="SMART" id="SM00382">
    <property type="entry name" value="AAA"/>
    <property type="match status" value="1"/>
</dbReference>
<dbReference type="SMART" id="SM00464">
    <property type="entry name" value="LON"/>
    <property type="match status" value="1"/>
</dbReference>
<dbReference type="SUPFAM" id="SSF52540">
    <property type="entry name" value="P-loop containing nucleoside triphosphate hydrolases"/>
    <property type="match status" value="1"/>
</dbReference>
<dbReference type="SUPFAM" id="SSF88697">
    <property type="entry name" value="PUA domain-like"/>
    <property type="match status" value="1"/>
</dbReference>
<dbReference type="SUPFAM" id="SSF54211">
    <property type="entry name" value="Ribosomal protein S5 domain 2-like"/>
    <property type="match status" value="1"/>
</dbReference>
<dbReference type="PROSITE" id="PS51787">
    <property type="entry name" value="LON_N"/>
    <property type="match status" value="1"/>
</dbReference>
<dbReference type="PROSITE" id="PS51786">
    <property type="entry name" value="LON_PROTEOLYTIC"/>
    <property type="match status" value="1"/>
</dbReference>
<dbReference type="PROSITE" id="PS01046">
    <property type="entry name" value="LON_SER"/>
    <property type="match status" value="1"/>
</dbReference>
<gene>
    <name type="ORF">OsI_27415</name>
</gene>
<comment type="function">
    <text evidence="1">ATP-dependent serine protease that mediates the selective degradation of misfolded, unassembled or oxidatively damaged polypeptides as well as certain short-lived regulatory proteins in the mitochondrial matrix. May also have a chaperone function in the assembly of inner membrane protein complexes. Participates in the regulation of mitochondrial gene expression and in the maintenance of the integrity of the mitochondrial genome. Binds to mitochondrial DNA in a site-specific manner.</text>
</comment>
<comment type="catalytic activity">
    <reaction evidence="1">
        <text>Hydrolysis of proteins in presence of ATP.</text>
        <dbReference type="EC" id="3.4.21.53"/>
    </reaction>
</comment>
<comment type="subunit">
    <text evidence="1">Homohexamer or homoheptamer. Organized in a ring with a central cavity.</text>
</comment>
<comment type="subcellular location">
    <subcellularLocation>
        <location evidence="1">Mitochondrion matrix</location>
    </subcellularLocation>
</comment>
<comment type="alternative products">
    <event type="alternative splicing"/>
    <isoform>
        <id>A2YQ56-1</id>
        <name>1</name>
        <sequence type="displayed"/>
    </isoform>
    <isoform>
        <id>A2YQ56-2</id>
        <name>2</name>
        <sequence type="described" ref="VSP_039540"/>
    </isoform>
</comment>
<comment type="miscellaneous">
    <text evidence="1">This protein may be expected to contain an N-terminal transit peptide but none has been predicted.</text>
</comment>
<comment type="similarity">
    <text evidence="1">Belongs to the peptidase S16 family.</text>
</comment>
<evidence type="ECO:0000255" key="1">
    <source>
        <dbReference type="HAMAP-Rule" id="MF_03120"/>
    </source>
</evidence>
<evidence type="ECO:0000255" key="2">
    <source>
        <dbReference type="PROSITE-ProRule" id="PRU01122"/>
    </source>
</evidence>
<evidence type="ECO:0000255" key="3">
    <source>
        <dbReference type="PROSITE-ProRule" id="PRU01123"/>
    </source>
</evidence>
<evidence type="ECO:0000303" key="4">
    <source ref="1"/>
</evidence>
<evidence type="ECO:0000305" key="5"/>
<reference key="1">
    <citation type="submission" date="2005-04" db="EMBL/GenBank/DDBJ databases">
        <title>Molecular cloning and characterization of OsLON1, a novel LON protease gene from Oryza sativa.</title>
        <authorList>
            <person name="Lin C.-F."/>
            <person name="Su W."/>
            <person name="Yang J.-S."/>
        </authorList>
    </citation>
    <scope>NUCLEOTIDE SEQUENCE [MRNA] (ISOFORM 2)</scope>
</reference>
<reference key="2">
    <citation type="journal article" date="2005" name="PLoS Biol.">
        <title>The genomes of Oryza sativa: a history of duplications.</title>
        <authorList>
            <person name="Yu J."/>
            <person name="Wang J."/>
            <person name="Lin W."/>
            <person name="Li S."/>
            <person name="Li H."/>
            <person name="Zhou J."/>
            <person name="Ni P."/>
            <person name="Dong W."/>
            <person name="Hu S."/>
            <person name="Zeng C."/>
            <person name="Zhang J."/>
            <person name="Zhang Y."/>
            <person name="Li R."/>
            <person name="Xu Z."/>
            <person name="Li S."/>
            <person name="Li X."/>
            <person name="Zheng H."/>
            <person name="Cong L."/>
            <person name="Lin L."/>
            <person name="Yin J."/>
            <person name="Geng J."/>
            <person name="Li G."/>
            <person name="Shi J."/>
            <person name="Liu J."/>
            <person name="Lv H."/>
            <person name="Li J."/>
            <person name="Wang J."/>
            <person name="Deng Y."/>
            <person name="Ran L."/>
            <person name="Shi X."/>
            <person name="Wang X."/>
            <person name="Wu Q."/>
            <person name="Li C."/>
            <person name="Ren X."/>
            <person name="Wang J."/>
            <person name="Wang X."/>
            <person name="Li D."/>
            <person name="Liu D."/>
            <person name="Zhang X."/>
            <person name="Ji Z."/>
            <person name="Zhao W."/>
            <person name="Sun Y."/>
            <person name="Zhang Z."/>
            <person name="Bao J."/>
            <person name="Han Y."/>
            <person name="Dong L."/>
            <person name="Ji J."/>
            <person name="Chen P."/>
            <person name="Wu S."/>
            <person name="Liu J."/>
            <person name="Xiao Y."/>
            <person name="Bu D."/>
            <person name="Tan J."/>
            <person name="Yang L."/>
            <person name="Ye C."/>
            <person name="Zhang J."/>
            <person name="Xu J."/>
            <person name="Zhou Y."/>
            <person name="Yu Y."/>
            <person name="Zhang B."/>
            <person name="Zhuang S."/>
            <person name="Wei H."/>
            <person name="Liu B."/>
            <person name="Lei M."/>
            <person name="Yu H."/>
            <person name="Li Y."/>
            <person name="Xu H."/>
            <person name="Wei S."/>
            <person name="He X."/>
            <person name="Fang L."/>
            <person name="Zhang Z."/>
            <person name="Zhang Y."/>
            <person name="Huang X."/>
            <person name="Su Z."/>
            <person name="Tong W."/>
            <person name="Li J."/>
            <person name="Tong Z."/>
            <person name="Li S."/>
            <person name="Ye J."/>
            <person name="Wang L."/>
            <person name="Fang L."/>
            <person name="Lei T."/>
            <person name="Chen C.-S."/>
            <person name="Chen H.-C."/>
            <person name="Xu Z."/>
            <person name="Li H."/>
            <person name="Huang H."/>
            <person name="Zhang F."/>
            <person name="Xu H."/>
            <person name="Li N."/>
            <person name="Zhao C."/>
            <person name="Li S."/>
            <person name="Dong L."/>
            <person name="Huang Y."/>
            <person name="Li L."/>
            <person name="Xi Y."/>
            <person name="Qi Q."/>
            <person name="Li W."/>
            <person name="Zhang B."/>
            <person name="Hu W."/>
            <person name="Zhang Y."/>
            <person name="Tian X."/>
            <person name="Jiao Y."/>
            <person name="Liang X."/>
            <person name="Jin J."/>
            <person name="Gao L."/>
            <person name="Zheng W."/>
            <person name="Hao B."/>
            <person name="Liu S.-M."/>
            <person name="Wang W."/>
            <person name="Yuan L."/>
            <person name="Cao M."/>
            <person name="McDermott J."/>
            <person name="Samudrala R."/>
            <person name="Wang J."/>
            <person name="Wong G.K.-S."/>
            <person name="Yang H."/>
        </authorList>
    </citation>
    <scope>NUCLEOTIDE SEQUENCE [LARGE SCALE GENOMIC DNA]</scope>
    <source>
        <strain>cv. 93-11</strain>
    </source>
</reference>
<feature type="chain" id="PRO_0000395766" description="Lon protease homolog, mitochondrial">
    <location>
        <begin position="1"/>
        <end position="1002"/>
    </location>
</feature>
<feature type="domain" description="Lon N-terminal" evidence="3">
    <location>
        <begin position="102"/>
        <end position="313"/>
    </location>
</feature>
<feature type="domain" description="Lon proteolytic" evidence="2">
    <location>
        <begin position="811"/>
        <end position="995"/>
    </location>
</feature>
<feature type="active site" evidence="1">
    <location>
        <position position="901"/>
    </location>
</feature>
<feature type="active site" evidence="1">
    <location>
        <position position="944"/>
    </location>
</feature>
<feature type="binding site" evidence="1">
    <location>
        <begin position="468"/>
        <end position="475"/>
    </location>
    <ligand>
        <name>ATP</name>
        <dbReference type="ChEBI" id="CHEBI:30616"/>
    </ligand>
</feature>
<feature type="splice variant" id="VSP_039540" description="In isoform 2." evidence="4">
    <location>
        <begin position="742"/>
        <end position="767"/>
    </location>
</feature>
<feature type="sequence conflict" description="In Ref. 1; AAY21162." evidence="5" ref="1">
    <original>K</original>
    <variation>N</variation>
    <location>
        <position position="735"/>
    </location>
</feature>
<feature type="sequence conflict" description="In Ref. 1; AAY21162." evidence="5" ref="1">
    <original>L</original>
    <variation>M</variation>
    <location>
        <position position="848"/>
    </location>
</feature>
<proteinExistence type="evidence at transcript level"/>
<name>LONM_ORYSI</name>
<keyword id="KW-0025">Alternative splicing</keyword>
<keyword id="KW-0067">ATP-binding</keyword>
<keyword id="KW-0238">DNA-binding</keyword>
<keyword id="KW-0378">Hydrolase</keyword>
<keyword id="KW-0496">Mitochondrion</keyword>
<keyword id="KW-0547">Nucleotide-binding</keyword>
<keyword id="KW-0645">Protease</keyword>
<keyword id="KW-1185">Reference proteome</keyword>
<keyword id="KW-0720">Serine protease</keyword>
<protein>
    <recommendedName>
        <fullName evidence="1">Lon protease homolog, mitochondrial</fullName>
        <ecNumber evidence="1">3.4.21.53</ecNumber>
    </recommendedName>
</protein>
<organism>
    <name type="scientific">Oryza sativa subsp. indica</name>
    <name type="common">Rice</name>
    <dbReference type="NCBI Taxonomy" id="39946"/>
    <lineage>
        <taxon>Eukaryota</taxon>
        <taxon>Viridiplantae</taxon>
        <taxon>Streptophyta</taxon>
        <taxon>Embryophyta</taxon>
        <taxon>Tracheophyta</taxon>
        <taxon>Spermatophyta</taxon>
        <taxon>Magnoliopsida</taxon>
        <taxon>Liliopsida</taxon>
        <taxon>Poales</taxon>
        <taxon>Poaceae</taxon>
        <taxon>BOP clade</taxon>
        <taxon>Oryzoideae</taxon>
        <taxon>Oryzeae</taxon>
        <taxon>Oryzinae</taxon>
        <taxon>Oryza</taxon>
        <taxon>Oryza sativa</taxon>
    </lineage>
</organism>